<proteinExistence type="inferred from homology"/>
<feature type="chain" id="PRO_0000140953" description="Thymidylate synthase">
    <location>
        <begin position="1"/>
        <end position="264"/>
    </location>
</feature>
<feature type="active site" description="Nucleophile" evidence="1">
    <location>
        <position position="146"/>
    </location>
</feature>
<feature type="binding site" description="in other chain" evidence="1">
    <location>
        <position position="21"/>
    </location>
    <ligand>
        <name>dUMP</name>
        <dbReference type="ChEBI" id="CHEBI:246422"/>
        <note>ligand shared between dimeric partners</note>
    </ligand>
</feature>
<feature type="binding site" evidence="1">
    <location>
        <position position="51"/>
    </location>
    <ligand>
        <name>(6R)-5,10-methylene-5,6,7,8-tetrahydrofolate</name>
        <dbReference type="ChEBI" id="CHEBI:15636"/>
    </ligand>
</feature>
<feature type="binding site" evidence="1">
    <location>
        <begin position="126"/>
        <end position="127"/>
    </location>
    <ligand>
        <name>dUMP</name>
        <dbReference type="ChEBI" id="CHEBI:246422"/>
        <note>ligand shared between dimeric partners</note>
    </ligand>
</feature>
<feature type="binding site" description="in other chain" evidence="1">
    <location>
        <begin position="166"/>
        <end position="169"/>
    </location>
    <ligand>
        <name>dUMP</name>
        <dbReference type="ChEBI" id="CHEBI:246422"/>
        <note>ligand shared between dimeric partners</note>
    </ligand>
</feature>
<feature type="binding site" evidence="1">
    <location>
        <position position="169"/>
    </location>
    <ligand>
        <name>(6R)-5,10-methylene-5,6,7,8-tetrahydrofolate</name>
        <dbReference type="ChEBI" id="CHEBI:15636"/>
    </ligand>
</feature>
<feature type="binding site" description="in other chain" evidence="1">
    <location>
        <position position="177"/>
    </location>
    <ligand>
        <name>dUMP</name>
        <dbReference type="ChEBI" id="CHEBI:246422"/>
        <note>ligand shared between dimeric partners</note>
    </ligand>
</feature>
<feature type="binding site" description="in other chain" evidence="1">
    <location>
        <begin position="207"/>
        <end position="209"/>
    </location>
    <ligand>
        <name>dUMP</name>
        <dbReference type="ChEBI" id="CHEBI:246422"/>
        <note>ligand shared between dimeric partners</note>
    </ligand>
</feature>
<feature type="binding site" evidence="1">
    <location>
        <position position="263"/>
    </location>
    <ligand>
        <name>(6R)-5,10-methylene-5,6,7,8-tetrahydrofolate</name>
        <dbReference type="ChEBI" id="CHEBI:15636"/>
    </ligand>
</feature>
<gene>
    <name evidence="1" type="primary">thyA</name>
    <name type="ordered locus">CBU_1547</name>
</gene>
<name>TYSY_COXBU</name>
<reference key="1">
    <citation type="journal article" date="2003" name="Proc. Natl. Acad. Sci. U.S.A.">
        <title>Complete genome sequence of the Q-fever pathogen, Coxiella burnetii.</title>
        <authorList>
            <person name="Seshadri R."/>
            <person name="Paulsen I.T."/>
            <person name="Eisen J.A."/>
            <person name="Read T.D."/>
            <person name="Nelson K.E."/>
            <person name="Nelson W.C."/>
            <person name="Ward N.L."/>
            <person name="Tettelin H."/>
            <person name="Davidsen T.M."/>
            <person name="Beanan M.J."/>
            <person name="DeBoy R.T."/>
            <person name="Daugherty S.C."/>
            <person name="Brinkac L.M."/>
            <person name="Madupu R."/>
            <person name="Dodson R.J."/>
            <person name="Khouri H.M."/>
            <person name="Lee K.H."/>
            <person name="Carty H.A."/>
            <person name="Scanlan D."/>
            <person name="Heinzen R.A."/>
            <person name="Thompson H.A."/>
            <person name="Samuel J.E."/>
            <person name="Fraser C.M."/>
            <person name="Heidelberg J.F."/>
        </authorList>
    </citation>
    <scope>NUCLEOTIDE SEQUENCE [LARGE SCALE GENOMIC DNA]</scope>
    <source>
        <strain>RSA 493 / Nine Mile phase I</strain>
    </source>
</reference>
<accession>Q83BG2</accession>
<evidence type="ECO:0000255" key="1">
    <source>
        <dbReference type="HAMAP-Rule" id="MF_00008"/>
    </source>
</evidence>
<sequence>MKEYLNFLQFILDHGVAKTDRTGIGTKSVFGYEMRFNLREGFPLVTTKKIHLKSVIYELLWFLRGDTNIQFLNDNGVTIWDEWADENGDLGPIYGKQWRRWHCPDGRTVDQMQRLIREIKTNPDSRRLIVSAWNVGELDQMALPPCHLLFQFYVADGFLSCKLTQRSADAFLGVPFNIASYSLLTHLIARQCNLKAGEFIWSGGDCHIYNTHQDQVSTQLSREPRALPQLIINRDPSSLYDYNFNDFSIVNYHPHPAIKAPVAV</sequence>
<protein>
    <recommendedName>
        <fullName evidence="1">Thymidylate synthase</fullName>
        <shortName evidence="1">TS</shortName>
        <shortName evidence="1">TSase</shortName>
        <ecNumber evidence="1">2.1.1.45</ecNumber>
    </recommendedName>
</protein>
<organism>
    <name type="scientific">Coxiella burnetii (strain RSA 493 / Nine Mile phase I)</name>
    <dbReference type="NCBI Taxonomy" id="227377"/>
    <lineage>
        <taxon>Bacteria</taxon>
        <taxon>Pseudomonadati</taxon>
        <taxon>Pseudomonadota</taxon>
        <taxon>Gammaproteobacteria</taxon>
        <taxon>Legionellales</taxon>
        <taxon>Coxiellaceae</taxon>
        <taxon>Coxiella</taxon>
    </lineage>
</organism>
<keyword id="KW-0963">Cytoplasm</keyword>
<keyword id="KW-0489">Methyltransferase</keyword>
<keyword id="KW-0545">Nucleotide biosynthesis</keyword>
<keyword id="KW-1185">Reference proteome</keyword>
<keyword id="KW-0808">Transferase</keyword>
<comment type="function">
    <text evidence="1">Catalyzes the reductive methylation of 2'-deoxyuridine-5'-monophosphate (dUMP) to 2'-deoxythymidine-5'-monophosphate (dTMP) while utilizing 5,10-methylenetetrahydrofolate (mTHF) as the methyl donor and reductant in the reaction, yielding dihydrofolate (DHF) as a by-product. This enzymatic reaction provides an intracellular de novo source of dTMP, an essential precursor for DNA biosynthesis.</text>
</comment>
<comment type="catalytic activity">
    <reaction evidence="1">
        <text>dUMP + (6R)-5,10-methylene-5,6,7,8-tetrahydrofolate = 7,8-dihydrofolate + dTMP</text>
        <dbReference type="Rhea" id="RHEA:12104"/>
        <dbReference type="ChEBI" id="CHEBI:15636"/>
        <dbReference type="ChEBI" id="CHEBI:57451"/>
        <dbReference type="ChEBI" id="CHEBI:63528"/>
        <dbReference type="ChEBI" id="CHEBI:246422"/>
        <dbReference type="EC" id="2.1.1.45"/>
    </reaction>
</comment>
<comment type="pathway">
    <text evidence="1">Pyrimidine metabolism; dTTP biosynthesis.</text>
</comment>
<comment type="subunit">
    <text evidence="1">Homodimer.</text>
</comment>
<comment type="subcellular location">
    <subcellularLocation>
        <location evidence="1">Cytoplasm</location>
    </subcellularLocation>
</comment>
<comment type="similarity">
    <text evidence="1">Belongs to the thymidylate synthase family. Bacterial-type ThyA subfamily.</text>
</comment>
<dbReference type="EC" id="2.1.1.45" evidence="1"/>
<dbReference type="EMBL" id="AE016828">
    <property type="protein sequence ID" value="AAO91044.1"/>
    <property type="molecule type" value="Genomic_DNA"/>
</dbReference>
<dbReference type="RefSeq" id="NP_820530.1">
    <property type="nucleotide sequence ID" value="NC_002971.4"/>
</dbReference>
<dbReference type="RefSeq" id="WP_005772639.1">
    <property type="nucleotide sequence ID" value="NC_002971.4"/>
</dbReference>
<dbReference type="SMR" id="Q83BG2"/>
<dbReference type="STRING" id="227377.CBU_1547"/>
<dbReference type="DNASU" id="1209457"/>
<dbReference type="EnsemblBacteria" id="AAO91044">
    <property type="protein sequence ID" value="AAO91044"/>
    <property type="gene ID" value="CBU_1547"/>
</dbReference>
<dbReference type="GeneID" id="1209457"/>
<dbReference type="KEGG" id="cbu:CBU_1547"/>
<dbReference type="PATRIC" id="fig|227377.7.peg.1548"/>
<dbReference type="eggNOG" id="COG0207">
    <property type="taxonomic scope" value="Bacteria"/>
</dbReference>
<dbReference type="HOGENOM" id="CLU_021669_0_0_6"/>
<dbReference type="OrthoDB" id="9774633at2"/>
<dbReference type="UniPathway" id="UPA00575"/>
<dbReference type="Proteomes" id="UP000002671">
    <property type="component" value="Chromosome"/>
</dbReference>
<dbReference type="GO" id="GO:0005829">
    <property type="term" value="C:cytosol"/>
    <property type="evidence" value="ECO:0000318"/>
    <property type="project" value="GO_Central"/>
</dbReference>
<dbReference type="GO" id="GO:0004799">
    <property type="term" value="F:thymidylate synthase activity"/>
    <property type="evidence" value="ECO:0000318"/>
    <property type="project" value="GO_Central"/>
</dbReference>
<dbReference type="GO" id="GO:0006231">
    <property type="term" value="P:dTMP biosynthetic process"/>
    <property type="evidence" value="ECO:0000318"/>
    <property type="project" value="GO_Central"/>
</dbReference>
<dbReference type="GO" id="GO:0006235">
    <property type="term" value="P:dTTP biosynthetic process"/>
    <property type="evidence" value="ECO:0007669"/>
    <property type="project" value="UniProtKB-UniRule"/>
</dbReference>
<dbReference type="GO" id="GO:0032259">
    <property type="term" value="P:methylation"/>
    <property type="evidence" value="ECO:0007669"/>
    <property type="project" value="UniProtKB-KW"/>
</dbReference>
<dbReference type="CDD" id="cd00351">
    <property type="entry name" value="TS_Pyrimidine_HMase"/>
    <property type="match status" value="1"/>
</dbReference>
<dbReference type="FunFam" id="3.30.572.10:FF:000013">
    <property type="entry name" value="Thymidylate synthase"/>
    <property type="match status" value="1"/>
</dbReference>
<dbReference type="Gene3D" id="3.30.572.10">
    <property type="entry name" value="Thymidylate synthase/dCMP hydroxymethylase domain"/>
    <property type="match status" value="1"/>
</dbReference>
<dbReference type="HAMAP" id="MF_00008">
    <property type="entry name" value="Thymidy_synth_bact"/>
    <property type="match status" value="1"/>
</dbReference>
<dbReference type="InterPro" id="IPR045097">
    <property type="entry name" value="Thymidate_synth/dCMP_Mease"/>
</dbReference>
<dbReference type="InterPro" id="IPR023451">
    <property type="entry name" value="Thymidate_synth/dCMP_Mease_dom"/>
</dbReference>
<dbReference type="InterPro" id="IPR036926">
    <property type="entry name" value="Thymidate_synth/dCMP_Mease_sf"/>
</dbReference>
<dbReference type="InterPro" id="IPR000398">
    <property type="entry name" value="Thymidylate_synthase"/>
</dbReference>
<dbReference type="InterPro" id="IPR020940">
    <property type="entry name" value="Thymidylate_synthase_AS"/>
</dbReference>
<dbReference type="NCBIfam" id="NF002497">
    <property type="entry name" value="PRK01827.1-3"/>
    <property type="match status" value="1"/>
</dbReference>
<dbReference type="NCBIfam" id="NF002499">
    <property type="entry name" value="PRK01827.1-5"/>
    <property type="match status" value="1"/>
</dbReference>
<dbReference type="NCBIfam" id="TIGR03284">
    <property type="entry name" value="thym_sym"/>
    <property type="match status" value="2"/>
</dbReference>
<dbReference type="PANTHER" id="PTHR11548:SF9">
    <property type="entry name" value="THYMIDYLATE SYNTHASE"/>
    <property type="match status" value="1"/>
</dbReference>
<dbReference type="PANTHER" id="PTHR11548">
    <property type="entry name" value="THYMIDYLATE SYNTHASE 1"/>
    <property type="match status" value="1"/>
</dbReference>
<dbReference type="Pfam" id="PF00303">
    <property type="entry name" value="Thymidylat_synt"/>
    <property type="match status" value="1"/>
</dbReference>
<dbReference type="PRINTS" id="PR00108">
    <property type="entry name" value="THYMDSNTHASE"/>
</dbReference>
<dbReference type="SUPFAM" id="SSF55831">
    <property type="entry name" value="Thymidylate synthase/dCMP hydroxymethylase"/>
    <property type="match status" value="1"/>
</dbReference>
<dbReference type="PROSITE" id="PS00091">
    <property type="entry name" value="THYMIDYLATE_SYNTHASE"/>
    <property type="match status" value="1"/>
</dbReference>